<comment type="function">
    <text>Core component of nucleosome. Nucleosomes wrap and compact DNA into chromatin, limiting DNA accessibility to the cellular machineries which require DNA as a template. Histones thereby play a central role in transcription regulation, DNA repair, DNA replication and chromosomal stability. DNA accessibility is regulated via a complex set of post-translational modifications of histones, also called histone code, and nucleosome remodeling.</text>
</comment>
<comment type="subunit">
    <text>The nucleosome is a histone octamer containing two molecules each of H2A, H2B, H3 and H4 assembled in one H3-H4 heterotetramer and two H2A-H2B heterodimers. The octamer wraps approximately 147 bp of DNA.</text>
</comment>
<comment type="subcellular location">
    <subcellularLocation>
        <location>Nucleus</location>
    </subcellularLocation>
    <subcellularLocation>
        <location>Chromosome</location>
    </subcellularLocation>
</comment>
<comment type="developmental stage">
    <text>Expressed during S phase, then expression strongly decreases as cell division slows down during the process of differentiation.</text>
</comment>
<comment type="PTM">
    <text evidence="8">Acetylation is generally linked to gene activation. Acetylation on Lys-19 (H3K18ac) and Lys-24 (H3K24ac) favors methylation at Arg-18 (H3R17me). Acetylation at Lys-123 (H3K122ac) by EP300/p300 plays a central role in chromatin structure: localizes at the surface of the histone octamer and stimulates transcription, possibly by promoting nucleosome instability (By similarity).</text>
</comment>
<comment type="PTM">
    <text evidence="8">Asymmetric dimethylation at Arg-18 (H3R17me2a) is linked to gene activation. Asymmetric dimethylation at Arg-3 (H3R2me2a) by prmt6 is linked to gene repression and is mutually exclusive with H3 Lys-5 methylation (H3K4me2 and H3K4me3). H3R2me2a is present at the 3' of genes regardless of their transcription state and is enriched on inactive promoters, while it is absent on active promoters (By similarity).</text>
</comment>
<comment type="PTM">
    <text evidence="8">Methylation at Lys-5 (H3K4me), Lys-37 (H3K36me) and Lys-80 (H3K79me) are linked to gene activation. Methylation at Lys-5 (H3K4me) facilitates subsequent acetylation of H3 and H4. Methylation at Lys-80 (H3K79me) is associated with DNA double-strand break (DSB) responses and is a specific target for tp53bp1. Methylation at Lys-10 (H3K9me) and Lys-28 (H3K27me) are linked to gene repression. Methylation at Lys-10 (H3K9me) is a specific target for HP1 proteins (cbx1, cbx3 and cbx5) and prevents subsequent phosphorylation at Ser-11 (H3S10ph) and acetylation of H3 and H4. Methylation at Lys-5 (H3K4me) and Lys-80 (H3K79me) require preliminary monoubiquitination of H2B at 'Lys-120' (By similarity).</text>
</comment>
<comment type="PTM">
    <text evidence="8">Phosphorylated at Thr-4 (H3T3ph) by VRK1 (By similarity). Phosphorylated at Thr-4 (H3T3ph) by HASPIN during prophase and dephosphorylated during anaphase. Phosphorylation at Ser-11 (H3S10ph) by aurkb is crucial for chromosome condensation and cell-cycle progression during mitosis and meiosis. In addition phosphorylation at Ser-11 (H3S10ph) by rps6ka4 and rps6ka5 is important during interphase because it enables the transcription of genes following external stimulation, like mitogens, stress, growth factors or UV irradiation and result in the activation of genes, such as c-fos and c-jun. Phosphorylation at Ser-11 (H3S10ph), which is linked to gene activation, prevents methylation at Lys-10 (H3K9me) but facilitates acetylation of H3 and H4. Phosphorylation at Ser-11 (H3S10ph) by aurkb mediates the dissociation of HP1 proteins (cbx1, cbx3 and cbx5) from heterochromatin. Phosphorylation at Ser-11 (H3S10ph) is also an essential regulatory mechanism for neoplastic cell transformation. Phosphorylated at Ser-29 (H3S28ph) by map3k20 isoform 1, rps6ka5 or aurkb during mitosis or upon ultraviolet B irradiation. Phosphorylation at Thr-7 (H3T6ph) by prkcb is a specific tag for epigenetic transcriptional activation that prevents demethylation of Lys-5 (H3K4me) by lsd1/kdm1a. At centromeres, specifically phosphorylated at Thr-12 (H3T11ph) from prophase to early anaphase, by DAPK3 and PKN1. Phosphorylation at Thr-12 (H3T11ph) by PKN1 or isoform M2 of PKM (PKM2) is a specific tag for epigenetic transcriptional activation that promotes demethylation of Lys-10 (H3K9me) by kdm4c/jmjd2c. Phosphorylation at Tyr-42 (H3Y41ph) by jak2 promotes exclusion of cbx5 (HP1 alpha) from chromatin (By similarity).</text>
</comment>
<comment type="PTM">
    <text evidence="8">Monoubiquitinated by rag1 in lymphoid cells, monoubiquitination is required for V(D)J recombination.</text>
</comment>
<comment type="PTM">
    <text evidence="8">Lysine deamination at Lys-5 (H3K4all) to form allysine only takes place on H3K4me3 and results in gene repression.</text>
</comment>
<comment type="PTM">
    <text evidence="3">Butyrylation of histones marks active promoters and competes with histone acetylation. It is present during late spermatogenesis.</text>
</comment>
<comment type="PTM">
    <text evidence="8">Succinylation at Lys-80 (H3K79succ) by KAT2A takes place with a maximum frequency around the transcription start sites of genes. It gives a specific tag for epigenetic transcription activation. Desuccinylation at Lys-123 (H3K122succ) by SIRT7 in response to DNA damage promotes chromatin condensation and double-strand breaks (DSBs) repair.</text>
</comment>
<comment type="PTM">
    <text evidence="2">Serine ADP-ribosylation by PARP1 or PARP2 constitutes the primary form of ADP-ribosylation of proteins in response to DNA damage. Serine ADP-ribosylation at Ser-11 (H3S10ADPr) promotes recruitment of CHD1L. H3S10ADPr is mutually exclusive with phosphorylation at Ser-11 (H3S10ph) and impairs acetylation at Lys-10 (H3K9ac).</text>
</comment>
<comment type="PTM">
    <text evidence="8">Serotonylated by TGM2 at Gln-6 (H3Q5ser) during serotonergic neuron differentiation (By similarity). H3Q5ser is associated with trimethylation of Lys-5 (H3K4me3) and enhances general transcription factor IID (TFIID) complex-binding to H3K4me3, thereby facilitating transcription (By similarity).</text>
</comment>
<comment type="PTM">
    <text evidence="7 8">Dopaminylated by TGM2 at Gln-6 (H3Q5dop) in ventral tegmental area (VTA) neurons (By similarity). H3Q5dop mediates neurotransmission-independent role of nuclear dopamine by regulating relapse-related transcriptional plasticity in the reward system (By similarity).</text>
</comment>
<comment type="PTM">
    <text evidence="8">Lactylated in macrophages by EP300/P300 by using lactoyl-CoA directly derived from endogenous or exogenous lactate, leading to stimulates gene transcription.</text>
</comment>
<comment type="similarity">
    <text evidence="10">Belongs to the histone H3 family.</text>
</comment>
<gene>
    <name type="ORF">zgc:113984</name>
</gene>
<gene>
    <name type="ORF">zgc:158629</name>
</gene>
<gene>
    <name type="ORF">si:dkeyp-46h3.6</name>
</gene>
<name>H32_DANRE</name>
<organism>
    <name type="scientific">Danio rerio</name>
    <name type="common">Zebrafish</name>
    <name type="synonym">Brachydanio rerio</name>
    <dbReference type="NCBI Taxonomy" id="7955"/>
    <lineage>
        <taxon>Eukaryota</taxon>
        <taxon>Metazoa</taxon>
        <taxon>Chordata</taxon>
        <taxon>Craniata</taxon>
        <taxon>Vertebrata</taxon>
        <taxon>Euteleostomi</taxon>
        <taxon>Actinopterygii</taxon>
        <taxon>Neopterygii</taxon>
        <taxon>Teleostei</taxon>
        <taxon>Ostariophysi</taxon>
        <taxon>Cypriniformes</taxon>
        <taxon>Danionidae</taxon>
        <taxon>Danioninae</taxon>
        <taxon>Danio</taxon>
    </lineage>
</organism>
<proteinExistence type="evidence at transcript level"/>
<dbReference type="EMBL" id="BC097060">
    <property type="protein sequence ID" value="AAH97060.1"/>
    <property type="molecule type" value="mRNA"/>
</dbReference>
<dbReference type="EMBL" id="BC129333">
    <property type="protein sequence ID" value="AAI29334.1"/>
    <property type="molecule type" value="mRNA"/>
</dbReference>
<dbReference type="EMBL" id="BC152073">
    <property type="protein sequence ID" value="AAI52074.1"/>
    <property type="molecule type" value="mRNA"/>
</dbReference>
<dbReference type="RefSeq" id="NP_001020342.1">
    <property type="nucleotide sequence ID" value="NM_001025171.1"/>
</dbReference>
<dbReference type="RefSeq" id="NP_001093643.1">
    <property type="nucleotide sequence ID" value="NM_001100173.1"/>
</dbReference>
<dbReference type="RefSeq" id="XP_017209523.1">
    <property type="nucleotide sequence ID" value="XM_017354034.1"/>
</dbReference>
<dbReference type="SMR" id="Q4QRF4"/>
<dbReference type="FunCoup" id="Q4QRF4">
    <property type="interactions" value="930"/>
</dbReference>
<dbReference type="STRING" id="7955.ENSDARP00000084277"/>
<dbReference type="PaxDb" id="7955-ENSDARP00000084277"/>
<dbReference type="Ensembl" id="ENSDART00000089844">
    <property type="protein sequence ID" value="ENSDARP00000084277"/>
    <property type="gene ID" value="ENSDARG00000068941"/>
</dbReference>
<dbReference type="Ensembl" id="ENSDART00000115062">
    <property type="protein sequence ID" value="ENSDARP00000099321"/>
    <property type="gene ID" value="ENSDARG00000101720"/>
</dbReference>
<dbReference type="Ensembl" id="ENSDART00000129254">
    <property type="protein sequence ID" value="ENSDARP00000107737"/>
    <property type="gene ID" value="ENSDARG00000115644"/>
</dbReference>
<dbReference type="Ensembl" id="ENSDART00000133379">
    <property type="protein sequence ID" value="ENSDARP00000112824"/>
    <property type="gene ID" value="ENSDARG00000094154"/>
</dbReference>
<dbReference type="Ensembl" id="ENSDART00000159524">
    <property type="protein sequence ID" value="ENSDARP00000140767"/>
    <property type="gene ID" value="ENSDARG00000105374"/>
</dbReference>
<dbReference type="Ensembl" id="ENSDART00000160575">
    <property type="protein sequence ID" value="ENSDARP00000130595"/>
    <property type="gene ID" value="ENSDARG00000098970"/>
</dbReference>
<dbReference type="Ensembl" id="ENSDART00000166041">
    <property type="protein sequence ID" value="ENSDARP00000135695"/>
    <property type="gene ID" value="ENSDARG00000105359"/>
</dbReference>
<dbReference type="Ensembl" id="ENSDART00000167099">
    <property type="protein sequence ID" value="ENSDARP00000139024"/>
    <property type="gene ID" value="ENSDARG00000103819"/>
</dbReference>
<dbReference type="Ensembl" id="ENSDART00000172825">
    <property type="protein sequence ID" value="ENSDARP00000142272"/>
    <property type="gene ID" value="ENSDARG00000105484"/>
</dbReference>
<dbReference type="Ensembl" id="ENSDART00000173032">
    <property type="protein sequence ID" value="ENSDARP00000142122"/>
    <property type="gene ID" value="ENSDARG00000105459"/>
</dbReference>
<dbReference type="Ensembl" id="ENSDART00000173349">
    <property type="protein sequence ID" value="ENSDARP00000142515"/>
    <property type="gene ID" value="ENSDARG00000105418"/>
</dbReference>
<dbReference type="Ensembl" id="ENSDART00000180881">
    <property type="protein sequence ID" value="ENSDARP00000157586"/>
    <property type="gene ID" value="ENSDARG00000112647"/>
</dbReference>
<dbReference type="Ensembl" id="ENSDART00000182484">
    <property type="protein sequence ID" value="ENSDARP00000146454"/>
    <property type="gene ID" value="ENSDARG00000114169"/>
</dbReference>
<dbReference type="Ensembl" id="ENSDART00000185229">
    <property type="protein sequence ID" value="ENSDARP00000156321"/>
    <property type="gene ID" value="ENSDARG00000114500"/>
</dbReference>
<dbReference type="Ensembl" id="ENSDART00000185379">
    <property type="protein sequence ID" value="ENSDARP00000149802"/>
    <property type="gene ID" value="ENSDARG00000112967"/>
</dbReference>
<dbReference type="Ensembl" id="ENSDART00000185663">
    <property type="protein sequence ID" value="ENSDARP00000153520"/>
    <property type="gene ID" value="ENSDARG00000114370"/>
</dbReference>
<dbReference type="Ensembl" id="ENSDART00000189008">
    <property type="protein sequence ID" value="ENSDARP00000145961"/>
    <property type="gene ID" value="ENSDARG00000112375"/>
</dbReference>
<dbReference type="GeneID" id="100329422"/>
<dbReference type="GeneID" id="100334933"/>
<dbReference type="GeneID" id="103909883"/>
<dbReference type="GeneID" id="570618"/>
<dbReference type="GeneID" id="573992"/>
<dbReference type="KEGG" id="dre:100329422"/>
<dbReference type="KEGG" id="dre:100334933"/>
<dbReference type="KEGG" id="dre:103909883"/>
<dbReference type="KEGG" id="dre:570618"/>
<dbReference type="KEGG" id="dre:573992"/>
<dbReference type="CTD" id="570618"/>
<dbReference type="CTD" id="573992"/>
<dbReference type="eggNOG" id="KOG1745">
    <property type="taxonomic scope" value="Eukaryota"/>
</dbReference>
<dbReference type="HOGENOM" id="CLU_078295_4_0_1"/>
<dbReference type="InParanoid" id="Q4QRF4"/>
<dbReference type="OMA" id="ASEAYLX"/>
<dbReference type="OrthoDB" id="10013248at2759"/>
<dbReference type="PhylomeDB" id="Q4QRF4"/>
<dbReference type="TreeFam" id="TF314241"/>
<dbReference type="Reactome" id="R-DRE-212300">
    <property type="pathway name" value="PRC2 methylates histones and DNA"/>
</dbReference>
<dbReference type="Reactome" id="R-DRE-2559580">
    <property type="pathway name" value="Oxidative Stress Induced Senescence"/>
</dbReference>
<dbReference type="Reactome" id="R-DRE-3214815">
    <property type="pathway name" value="HDACs deacetylate histones"/>
</dbReference>
<dbReference type="Reactome" id="R-DRE-427413">
    <property type="pathway name" value="NoRC negatively regulates rRNA expression"/>
</dbReference>
<dbReference type="Reactome" id="R-DRE-5625886">
    <property type="pathway name" value="Activated PKN1 stimulates transcription of AR (androgen receptor) regulated genes KLK2 and KLK3"/>
</dbReference>
<dbReference type="Reactome" id="R-DRE-73728">
    <property type="pathway name" value="RNA Polymerase I Promoter Opening"/>
</dbReference>
<dbReference type="Reactome" id="R-DRE-8936459">
    <property type="pathway name" value="RUNX1 regulates genes involved in megakaryocyte differentiation and platelet function"/>
</dbReference>
<dbReference type="Reactome" id="R-DRE-9018519">
    <property type="pathway name" value="Estrogen-dependent gene expression"/>
</dbReference>
<dbReference type="Reactome" id="R-DRE-983231">
    <property type="pathway name" value="Factors involved in megakaryocyte development and platelet production"/>
</dbReference>
<dbReference type="Reactome" id="R-DRE-9841922">
    <property type="pathway name" value="MLL4 and MLL3 complexes regulate expression of PPARG target genes in adipogenesis and hepatic steatosis"/>
</dbReference>
<dbReference type="Reactome" id="R-DRE-9843940">
    <property type="pathway name" value="Regulation of endogenous retroelements by KRAB-ZFP proteins"/>
</dbReference>
<dbReference type="Reactome" id="R-DRE-9843970">
    <property type="pathway name" value="Regulation of endogenous retroelements by the Human Silencing Hub (HUSH) complex"/>
</dbReference>
<dbReference type="PRO" id="PR:Q4QRF4"/>
<dbReference type="Proteomes" id="UP000000437">
    <property type="component" value="Chromosome 25"/>
</dbReference>
<dbReference type="Bgee" id="ENSDARG00000068941">
    <property type="expression patterns" value="Expressed in gastrula and 8 other cell types or tissues"/>
</dbReference>
<dbReference type="ExpressionAtlas" id="Q4QRF4">
    <property type="expression patterns" value="baseline"/>
</dbReference>
<dbReference type="GO" id="GO:0000786">
    <property type="term" value="C:nucleosome"/>
    <property type="evidence" value="ECO:0007669"/>
    <property type="project" value="UniProtKB-KW"/>
</dbReference>
<dbReference type="GO" id="GO:0005634">
    <property type="term" value="C:nucleus"/>
    <property type="evidence" value="ECO:0007669"/>
    <property type="project" value="UniProtKB-SubCell"/>
</dbReference>
<dbReference type="GO" id="GO:0003677">
    <property type="term" value="F:DNA binding"/>
    <property type="evidence" value="ECO:0007669"/>
    <property type="project" value="UniProtKB-KW"/>
</dbReference>
<dbReference type="GO" id="GO:0046982">
    <property type="term" value="F:protein heterodimerization activity"/>
    <property type="evidence" value="ECO:0007669"/>
    <property type="project" value="InterPro"/>
</dbReference>
<dbReference type="GO" id="GO:0030527">
    <property type="term" value="F:structural constituent of chromatin"/>
    <property type="evidence" value="ECO:0007669"/>
    <property type="project" value="InterPro"/>
</dbReference>
<dbReference type="CDD" id="cd22911">
    <property type="entry name" value="HFD_H3"/>
    <property type="match status" value="1"/>
</dbReference>
<dbReference type="FunFam" id="1.10.20.10:FF:000078">
    <property type="entry name" value="Histone H3"/>
    <property type="match status" value="1"/>
</dbReference>
<dbReference type="FunFam" id="1.10.20.10:FF:000044">
    <property type="entry name" value="Histone H3.3"/>
    <property type="match status" value="1"/>
</dbReference>
<dbReference type="Gene3D" id="1.10.20.10">
    <property type="entry name" value="Histone, subunit A"/>
    <property type="match status" value="1"/>
</dbReference>
<dbReference type="InterPro" id="IPR009072">
    <property type="entry name" value="Histone-fold"/>
</dbReference>
<dbReference type="InterPro" id="IPR007125">
    <property type="entry name" value="Histone_H2A/H2B/H3"/>
</dbReference>
<dbReference type="InterPro" id="IPR000164">
    <property type="entry name" value="Histone_H3/CENP-A"/>
</dbReference>
<dbReference type="PANTHER" id="PTHR11426">
    <property type="entry name" value="HISTONE H3"/>
    <property type="match status" value="1"/>
</dbReference>
<dbReference type="Pfam" id="PF00125">
    <property type="entry name" value="Histone"/>
    <property type="match status" value="1"/>
</dbReference>
<dbReference type="PRINTS" id="PR00622">
    <property type="entry name" value="HISTONEH3"/>
</dbReference>
<dbReference type="SMART" id="SM00428">
    <property type="entry name" value="H3"/>
    <property type="match status" value="1"/>
</dbReference>
<dbReference type="SUPFAM" id="SSF47113">
    <property type="entry name" value="Histone-fold"/>
    <property type="match status" value="1"/>
</dbReference>
<dbReference type="PROSITE" id="PS00322">
    <property type="entry name" value="HISTONE_H3_1"/>
    <property type="match status" value="1"/>
</dbReference>
<dbReference type="PROSITE" id="PS00959">
    <property type="entry name" value="HISTONE_H3_2"/>
    <property type="match status" value="1"/>
</dbReference>
<accession>Q4QRF4</accession>
<accession>A2VD42</accession>
<evidence type="ECO:0000250" key="1"/>
<evidence type="ECO:0000250" key="2">
    <source>
        <dbReference type="UniProtKB" id="P68431"/>
    </source>
</evidence>
<evidence type="ECO:0000250" key="3">
    <source>
        <dbReference type="UniProtKB" id="P68433"/>
    </source>
</evidence>
<evidence type="ECO:0000250" key="4">
    <source>
        <dbReference type="UniProtKB" id="P84227"/>
    </source>
</evidence>
<evidence type="ECO:0000250" key="5">
    <source>
        <dbReference type="UniProtKB" id="P84228"/>
    </source>
</evidence>
<evidence type="ECO:0000250" key="6">
    <source>
        <dbReference type="UniProtKB" id="P84243"/>
    </source>
</evidence>
<evidence type="ECO:0000250" key="7">
    <source>
        <dbReference type="UniProtKB" id="P84245"/>
    </source>
</evidence>
<evidence type="ECO:0000250" key="8">
    <source>
        <dbReference type="UniProtKB" id="Q71DI3"/>
    </source>
</evidence>
<evidence type="ECO:0000256" key="9">
    <source>
        <dbReference type="SAM" id="MobiDB-lite"/>
    </source>
</evidence>
<evidence type="ECO:0000305" key="10"/>
<keyword id="KW-0007">Acetylation</keyword>
<keyword id="KW-0013">ADP-ribosylation</keyword>
<keyword id="KW-0158">Chromosome</keyword>
<keyword id="KW-0164">Citrullination</keyword>
<keyword id="KW-0238">DNA-binding</keyword>
<keyword id="KW-0379">Hydroxylation</keyword>
<keyword id="KW-0449">Lipoprotein</keyword>
<keyword id="KW-0488">Methylation</keyword>
<keyword id="KW-0544">Nucleosome core</keyword>
<keyword id="KW-0539">Nucleus</keyword>
<keyword id="KW-0564">Palmitate</keyword>
<keyword id="KW-0597">Phosphoprotein</keyword>
<keyword id="KW-1185">Reference proteome</keyword>
<keyword id="KW-0832">Ubl conjugation</keyword>
<feature type="initiator methionine" description="Removed" evidence="4">
    <location>
        <position position="1"/>
    </location>
</feature>
<feature type="chain" id="PRO_0000253952" description="Histone H3.2">
    <location>
        <begin position="2"/>
        <end position="136"/>
    </location>
</feature>
<feature type="region of interest" description="Disordered" evidence="9">
    <location>
        <begin position="1"/>
        <end position="43"/>
    </location>
</feature>
<feature type="modified residue" description="Asymmetric dimethylarginine; by PRMT6; alternate" evidence="8">
    <location>
        <position position="3"/>
    </location>
</feature>
<feature type="modified residue" description="Citrulline; alternate" evidence="8">
    <location>
        <position position="3"/>
    </location>
</feature>
<feature type="modified residue" description="Phosphothreonine; by HASPIN and VRK1" evidence="8">
    <location>
        <position position="4"/>
    </location>
</feature>
<feature type="modified residue" description="Allysine; alternate" evidence="8">
    <location>
        <position position="5"/>
    </location>
</feature>
<feature type="modified residue" description="N6,N6,N6-trimethyllysine; alternate" evidence="8">
    <location>
        <position position="5"/>
    </location>
</feature>
<feature type="modified residue" description="N6,N6-dimethyllysine; alternate" evidence="8">
    <location>
        <position position="5"/>
    </location>
</feature>
<feature type="modified residue" description="N6-(2-hydroxyisobutyryl)lysine; alternate" evidence="2">
    <location>
        <position position="5"/>
    </location>
</feature>
<feature type="modified residue" description="N6-acetyllysine; alternate" evidence="8">
    <location>
        <position position="5"/>
    </location>
</feature>
<feature type="modified residue" description="N6-crotonyllysine; alternate" evidence="8">
    <location>
        <position position="5"/>
    </location>
</feature>
<feature type="modified residue" description="N6-methyllysine; alternate" evidence="8">
    <location>
        <position position="5"/>
    </location>
</feature>
<feature type="modified residue" description="5-glutamyl dopamine; alternate" evidence="8">
    <location>
        <position position="6"/>
    </location>
</feature>
<feature type="modified residue" description="5-glutamyl serotonin; alternate" evidence="8">
    <location>
        <position position="6"/>
    </location>
</feature>
<feature type="modified residue" description="Phosphothreonine; by PKC" evidence="8">
    <location>
        <position position="7"/>
    </location>
</feature>
<feature type="modified residue" description="Citrulline; alternate" evidence="8">
    <location>
        <position position="9"/>
    </location>
</feature>
<feature type="modified residue" description="Symmetric dimethylarginine; by PRMT5; alternate" evidence="1">
    <location>
        <position position="9"/>
    </location>
</feature>
<feature type="modified residue" description="N6,N6,N6-trimethyllysine; alternate" evidence="8">
    <location>
        <position position="10"/>
    </location>
</feature>
<feature type="modified residue" description="N6,N6-dimethyllysine; alternate" evidence="8">
    <location>
        <position position="10"/>
    </location>
</feature>
<feature type="modified residue" description="N6-(2-hydroxyisobutyryl)lysine; alternate" evidence="2">
    <location>
        <position position="10"/>
    </location>
</feature>
<feature type="modified residue" description="N6-acetyllysine; alternate" evidence="8">
    <location>
        <position position="10"/>
    </location>
</feature>
<feature type="modified residue" description="N6-crotonyllysine; alternate" evidence="8">
    <location>
        <position position="10"/>
    </location>
</feature>
<feature type="modified residue" description="N6-lactoyllysine; alternate" evidence="8">
    <location>
        <position position="10"/>
    </location>
</feature>
<feature type="modified residue" description="N6-methyllysine; alternate" evidence="8">
    <location>
        <position position="10"/>
    </location>
</feature>
<feature type="modified residue" description="ADP-ribosylserine; alternate" evidence="2">
    <location>
        <position position="11"/>
    </location>
</feature>
<feature type="modified residue" description="Phosphoserine; alternate; by AURKB, AURKC, RPS6KA3, RPS6KA4 and RPS6KA5" evidence="8">
    <location>
        <position position="11"/>
    </location>
</feature>
<feature type="modified residue" description="Phosphothreonine; by PKC" evidence="8">
    <location>
        <position position="12"/>
    </location>
</feature>
<feature type="modified residue" description="N6-(2-hydroxyisobutyryl)lysine; alternate" evidence="2">
    <location>
        <position position="15"/>
    </location>
</feature>
<feature type="modified residue" description="N6-acetyllysine" evidence="8">
    <location>
        <position position="15"/>
    </location>
</feature>
<feature type="modified residue" description="N6-glutaryllysine; alternate" evidence="8">
    <location>
        <position position="15"/>
    </location>
</feature>
<feature type="modified residue" description="N6-lactoyllysine; alternate" evidence="5">
    <location>
        <position position="15"/>
    </location>
</feature>
<feature type="modified residue" description="Asymmetric dimethylarginine; by CARM1; alternate" evidence="8">
    <location>
        <position position="18"/>
    </location>
</feature>
<feature type="modified residue" description="Citrulline; alternate" evidence="8">
    <location>
        <position position="18"/>
    </location>
</feature>
<feature type="modified residue" description="N6-(2-hydroxyisobutyryl)lysine; alternate" evidence="2">
    <location>
        <position position="19"/>
    </location>
</feature>
<feature type="modified residue" description="N6-acetyllysine; alternate" evidence="8">
    <location>
        <position position="19"/>
    </location>
</feature>
<feature type="modified residue" description="N6-butyryllysine; alternate" evidence="3">
    <location>
        <position position="19"/>
    </location>
</feature>
<feature type="modified residue" description="N6-crotonyllysine; alternate" evidence="8">
    <location>
        <position position="19"/>
    </location>
</feature>
<feature type="modified residue" description="N6-glutaryllysine; alternate" evidence="8">
    <location>
        <position position="19"/>
    </location>
</feature>
<feature type="modified residue" description="N6-lactoyllysine; alternate" evidence="8">
    <location>
        <position position="19"/>
    </location>
</feature>
<feature type="modified residue" description="N6-methyllysine; alternate" evidence="8">
    <location>
        <position position="19"/>
    </location>
</feature>
<feature type="modified residue" description="N6-(2-hydroxyisobutyryl)lysine; alternate" evidence="2">
    <location>
        <position position="24"/>
    </location>
</feature>
<feature type="modified residue" description="N6-acetyllysine; alternate" evidence="8">
    <location>
        <position position="24"/>
    </location>
</feature>
<feature type="modified residue" description="N6-butyryllysine; alternate" evidence="3">
    <location>
        <position position="24"/>
    </location>
</feature>
<feature type="modified residue" description="N6-crotonyllysine; alternate" evidence="8">
    <location>
        <position position="24"/>
    </location>
</feature>
<feature type="modified residue" description="N6-glutaryllysine; alternate" evidence="8">
    <location>
        <position position="24"/>
    </location>
</feature>
<feature type="modified residue" description="N6-lactoyllysine; alternate" evidence="8">
    <location>
        <position position="24"/>
    </location>
</feature>
<feature type="modified residue" description="N6-methyllysine; alternate" evidence="8">
    <location>
        <position position="24"/>
    </location>
</feature>
<feature type="modified residue" description="Citrulline" evidence="8">
    <location>
        <position position="27"/>
    </location>
</feature>
<feature type="modified residue" description="N6,N6,N6-trimethyllysine; alternate" evidence="8">
    <location>
        <position position="28"/>
    </location>
</feature>
<feature type="modified residue" description="N6,N6-dimethyllysine; alternate" evidence="8">
    <location>
        <position position="28"/>
    </location>
</feature>
<feature type="modified residue" description="N6-(2-hydroxyisobutyryl)lysine; alternate" evidence="2">
    <location>
        <position position="28"/>
    </location>
</feature>
<feature type="modified residue" description="N6-acetyllysine; alternate" evidence="8">
    <location>
        <position position="28"/>
    </location>
</feature>
<feature type="modified residue" description="N6-crotonyllysine; alternate" evidence="8">
    <location>
        <position position="28"/>
    </location>
</feature>
<feature type="modified residue" description="N6-glutaryllysine; alternate" evidence="8">
    <location>
        <position position="28"/>
    </location>
</feature>
<feature type="modified residue" description="N6-lactoyllysine; alternate" evidence="8">
    <location>
        <position position="28"/>
    </location>
</feature>
<feature type="modified residue" description="N6-methyllysine; alternate" evidence="8">
    <location>
        <position position="28"/>
    </location>
</feature>
<feature type="modified residue" description="ADP-ribosylserine; alternate" evidence="2">
    <location>
        <position position="29"/>
    </location>
</feature>
<feature type="modified residue" description="Phosphoserine; alternate; by AURKB, AURKC and RPS6KA5" evidence="8">
    <location>
        <position position="29"/>
    </location>
</feature>
<feature type="modified residue" description="N6,N6,N6-trimethyllysine; alternate" evidence="8">
    <location>
        <position position="37"/>
    </location>
</feature>
<feature type="modified residue" description="N6,N6-dimethyllysine; alternate" evidence="8">
    <location>
        <position position="37"/>
    </location>
</feature>
<feature type="modified residue" description="N6-(2-hydroxyisobutyryl)lysine; alternate" evidence="2">
    <location>
        <position position="37"/>
    </location>
</feature>
<feature type="modified residue" description="N6-acetyllysine; alternate" evidence="8">
    <location>
        <position position="37"/>
    </location>
</feature>
<feature type="modified residue" description="N6-methyllysine; alternate" evidence="8">
    <location>
        <position position="37"/>
    </location>
</feature>
<feature type="modified residue" description="N6-methyllysine" evidence="2">
    <location>
        <position position="38"/>
    </location>
</feature>
<feature type="modified residue" description="Phosphotyrosine" evidence="8">
    <location>
        <position position="42"/>
    </location>
</feature>
<feature type="modified residue" description="N6,N6,N6-trimethyllysine; alternate" evidence="8">
    <location>
        <position position="57"/>
    </location>
</feature>
<feature type="modified residue" description="N6-(2-hydroxyisobutyryl)lysine; alternate" evidence="2">
    <location>
        <position position="57"/>
    </location>
</feature>
<feature type="modified residue" description="N6-acetyllysine; alternate" evidence="8">
    <location>
        <position position="57"/>
    </location>
</feature>
<feature type="modified residue" description="N6-crotonyllysine; alternate" evidence="8">
    <location>
        <position position="57"/>
    </location>
</feature>
<feature type="modified residue" description="N6-glutaryllysine; alternate" evidence="8">
    <location>
        <position position="57"/>
    </location>
</feature>
<feature type="modified residue" description="N6-lactoyllysine; alternate" evidence="5">
    <location>
        <position position="57"/>
    </location>
</feature>
<feature type="modified residue" description="N6-methyllysine; by EHMT2; alternate" evidence="8">
    <location>
        <position position="57"/>
    </location>
</feature>
<feature type="modified residue" description="N6-succinyllysine; alternate" evidence="5">
    <location>
        <position position="57"/>
    </location>
</feature>
<feature type="modified residue" description="Phosphoserine" evidence="8">
    <location>
        <position position="58"/>
    </location>
</feature>
<feature type="modified residue" description="N6-(2-hydroxyisobutyryl)lysine; alternate" evidence="2">
    <location>
        <position position="65"/>
    </location>
</feature>
<feature type="modified residue" description="N6-methyllysine; alternate" evidence="8">
    <location>
        <position position="65"/>
    </location>
</feature>
<feature type="modified residue" description="N6,N6,N6-trimethyllysine; alternate" evidence="5">
    <location>
        <position position="80"/>
    </location>
</feature>
<feature type="modified residue" description="N6,N6-dimethyllysine; alternate" evidence="8">
    <location>
        <position position="80"/>
    </location>
</feature>
<feature type="modified residue" description="N6-(2-hydroxyisobutyryl)lysine; alternate" evidence="2">
    <location>
        <position position="80"/>
    </location>
</feature>
<feature type="modified residue" description="N6-acetyllysine; alternate" evidence="8">
    <location>
        <position position="80"/>
    </location>
</feature>
<feature type="modified residue" description="N6-glutaryllysine; alternate" evidence="8">
    <location>
        <position position="80"/>
    </location>
</feature>
<feature type="modified residue" description="N6-lactoyllysine; alternate" evidence="8">
    <location>
        <position position="80"/>
    </location>
</feature>
<feature type="modified residue" description="N6-methyllysine; alternate" evidence="8">
    <location>
        <position position="80"/>
    </location>
</feature>
<feature type="modified residue" description="N6-succinyllysine; alternate" evidence="5">
    <location>
        <position position="80"/>
    </location>
</feature>
<feature type="modified residue" description="Phosphothreonine" evidence="8">
    <location>
        <position position="81"/>
    </location>
</feature>
<feature type="modified residue" description="Phosphoserine" evidence="6">
    <location>
        <position position="87"/>
    </location>
</feature>
<feature type="modified residue" description="Phosphothreonine" evidence="8">
    <location>
        <position position="108"/>
    </location>
</feature>
<feature type="modified residue" description="N6-acetyllysine; alternate" evidence="8">
    <location>
        <position position="116"/>
    </location>
</feature>
<feature type="modified residue" description="N6-glutaryllysine; alternate" evidence="8">
    <location>
        <position position="116"/>
    </location>
</feature>
<feature type="modified residue" description="N6-(2-hydroxyisobutyryl)lysine; alternate" evidence="2">
    <location>
        <position position="123"/>
    </location>
</feature>
<feature type="modified residue" description="N6-acetyllysine; alternate" evidence="8">
    <location>
        <position position="123"/>
    </location>
</feature>
<feature type="modified residue" description="N6-glutaryllysine; alternate" evidence="8">
    <location>
        <position position="123"/>
    </location>
</feature>
<feature type="modified residue" description="N6-methyllysine; alternate" evidence="8">
    <location>
        <position position="123"/>
    </location>
</feature>
<feature type="modified residue" description="N6-succinyllysine; alternate" evidence="8">
    <location>
        <position position="123"/>
    </location>
</feature>
<feature type="lipid moiety-binding region" description="S-palmitoyl cysteine" evidence="8">
    <location>
        <position position="111"/>
    </location>
</feature>
<protein>
    <recommendedName>
        <fullName>Histone H3.2</fullName>
    </recommendedName>
</protein>
<reference key="1">
    <citation type="submission" date="2007-08" db="EMBL/GenBank/DDBJ databases">
        <authorList>
            <consortium name="NIH - Zebrafish Gene Collection (ZGC) project"/>
        </authorList>
    </citation>
    <scope>NUCLEOTIDE SEQUENCE [LARGE SCALE MRNA]</scope>
    <source>
        <tissue>Embryo</tissue>
        <tissue>Eye</tissue>
        <tissue>Testis</tissue>
    </source>
</reference>
<sequence>MARTKQTARKSTGGKAPRKQLATKAARKSAPATGGVKKPHRYRPGTVALREIRRYQKSTELLIRKLPFQRLVREIAQDFKTDLRFQSSAVMALQEASEAYLVGLFEDTNLCAIHAKRVTIMPKDIQLARRIRGERA</sequence>